<name>HSCB_NEIG2</name>
<feature type="chain" id="PRO_1000131742" description="Co-chaperone protein HscB homolog">
    <location>
        <begin position="1"/>
        <end position="166"/>
    </location>
</feature>
<feature type="domain" description="J" evidence="1">
    <location>
        <begin position="3"/>
        <end position="75"/>
    </location>
</feature>
<sequence>MSQYFTLFRIEPAFDIGTENLEQTYRALAARFHPDKFASASAFEQKQAVMMSSTINDAYRTLKNPIDRAAYLLKTSGIDADAPEHTSFAPDFLMQQMEWRETLMEARAGNNLESLKNLDNEIRAEQEKLFCGLKQSFARQDCDTAAQQVRQGRFLDKLRHEISSAL</sequence>
<keyword id="KW-0143">Chaperone</keyword>
<organism>
    <name type="scientific">Neisseria gonorrhoeae (strain NCCP11945)</name>
    <dbReference type="NCBI Taxonomy" id="521006"/>
    <lineage>
        <taxon>Bacteria</taxon>
        <taxon>Pseudomonadati</taxon>
        <taxon>Pseudomonadota</taxon>
        <taxon>Betaproteobacteria</taxon>
        <taxon>Neisseriales</taxon>
        <taxon>Neisseriaceae</taxon>
        <taxon>Neisseria</taxon>
    </lineage>
</organism>
<evidence type="ECO:0000255" key="1">
    <source>
        <dbReference type="HAMAP-Rule" id="MF_00682"/>
    </source>
</evidence>
<reference key="1">
    <citation type="journal article" date="2008" name="J. Bacteriol.">
        <title>Complete genome sequence of Neisseria gonorrhoeae NCCP11945.</title>
        <authorList>
            <person name="Chung G.T."/>
            <person name="Yoo J.S."/>
            <person name="Oh H.B."/>
            <person name="Lee Y.S."/>
            <person name="Cha S.H."/>
            <person name="Kim S.J."/>
            <person name="Yoo C.K."/>
        </authorList>
    </citation>
    <scope>NUCLEOTIDE SEQUENCE [LARGE SCALE GENOMIC DNA]</scope>
    <source>
        <strain>NCCP11945</strain>
    </source>
</reference>
<accession>B4RMC3</accession>
<dbReference type="EMBL" id="CP001050">
    <property type="protein sequence ID" value="ACF29959.1"/>
    <property type="molecule type" value="Genomic_DNA"/>
</dbReference>
<dbReference type="RefSeq" id="WP_003688894.1">
    <property type="nucleotide sequence ID" value="NC_011035.1"/>
</dbReference>
<dbReference type="SMR" id="B4RMC3"/>
<dbReference type="GeneID" id="66752967"/>
<dbReference type="KEGG" id="ngk:NGK_1283"/>
<dbReference type="HOGENOM" id="CLU_068529_2_0_4"/>
<dbReference type="Proteomes" id="UP000002564">
    <property type="component" value="Chromosome"/>
</dbReference>
<dbReference type="GO" id="GO:1990230">
    <property type="term" value="C:iron-sulfur cluster transfer complex"/>
    <property type="evidence" value="ECO:0007669"/>
    <property type="project" value="TreeGrafter"/>
</dbReference>
<dbReference type="GO" id="GO:0001671">
    <property type="term" value="F:ATPase activator activity"/>
    <property type="evidence" value="ECO:0007669"/>
    <property type="project" value="InterPro"/>
</dbReference>
<dbReference type="GO" id="GO:0051087">
    <property type="term" value="F:protein-folding chaperone binding"/>
    <property type="evidence" value="ECO:0007669"/>
    <property type="project" value="InterPro"/>
</dbReference>
<dbReference type="GO" id="GO:0044571">
    <property type="term" value="P:[2Fe-2S] cluster assembly"/>
    <property type="evidence" value="ECO:0007669"/>
    <property type="project" value="InterPro"/>
</dbReference>
<dbReference type="GO" id="GO:0051259">
    <property type="term" value="P:protein complex oligomerization"/>
    <property type="evidence" value="ECO:0007669"/>
    <property type="project" value="InterPro"/>
</dbReference>
<dbReference type="GO" id="GO:0006457">
    <property type="term" value="P:protein folding"/>
    <property type="evidence" value="ECO:0007669"/>
    <property type="project" value="UniProtKB-UniRule"/>
</dbReference>
<dbReference type="CDD" id="cd06257">
    <property type="entry name" value="DnaJ"/>
    <property type="match status" value="1"/>
</dbReference>
<dbReference type="FunFam" id="1.10.287.110:FF:000088">
    <property type="entry name" value="Co-chaperone protein HscB homolog"/>
    <property type="match status" value="1"/>
</dbReference>
<dbReference type="Gene3D" id="1.10.287.110">
    <property type="entry name" value="DnaJ domain"/>
    <property type="match status" value="1"/>
</dbReference>
<dbReference type="Gene3D" id="1.20.1280.20">
    <property type="entry name" value="HscB, C-terminal domain"/>
    <property type="match status" value="1"/>
</dbReference>
<dbReference type="HAMAP" id="MF_00682">
    <property type="entry name" value="HscB"/>
    <property type="match status" value="1"/>
</dbReference>
<dbReference type="InterPro" id="IPR001623">
    <property type="entry name" value="DnaJ_domain"/>
</dbReference>
<dbReference type="InterPro" id="IPR004640">
    <property type="entry name" value="HscB"/>
</dbReference>
<dbReference type="InterPro" id="IPR036386">
    <property type="entry name" value="HscB_C_sf"/>
</dbReference>
<dbReference type="InterPro" id="IPR009073">
    <property type="entry name" value="HscB_oligo_C"/>
</dbReference>
<dbReference type="InterPro" id="IPR036869">
    <property type="entry name" value="J_dom_sf"/>
</dbReference>
<dbReference type="NCBIfam" id="TIGR00714">
    <property type="entry name" value="hscB"/>
    <property type="match status" value="1"/>
</dbReference>
<dbReference type="PANTHER" id="PTHR14021">
    <property type="entry name" value="IRON-SULFUR CLUSTER CO-CHAPERONE PROTEIN HSCB"/>
    <property type="match status" value="1"/>
</dbReference>
<dbReference type="PANTHER" id="PTHR14021:SF15">
    <property type="entry name" value="IRON-SULFUR CLUSTER CO-CHAPERONE PROTEIN HSCB"/>
    <property type="match status" value="1"/>
</dbReference>
<dbReference type="Pfam" id="PF00226">
    <property type="entry name" value="DnaJ"/>
    <property type="match status" value="1"/>
</dbReference>
<dbReference type="Pfam" id="PF07743">
    <property type="entry name" value="HSCB_C"/>
    <property type="match status" value="1"/>
</dbReference>
<dbReference type="SMART" id="SM00271">
    <property type="entry name" value="DnaJ"/>
    <property type="match status" value="1"/>
</dbReference>
<dbReference type="SUPFAM" id="SSF46565">
    <property type="entry name" value="Chaperone J-domain"/>
    <property type="match status" value="1"/>
</dbReference>
<dbReference type="SUPFAM" id="SSF47144">
    <property type="entry name" value="HSC20 (HSCB), C-terminal oligomerisation domain"/>
    <property type="match status" value="1"/>
</dbReference>
<dbReference type="PROSITE" id="PS50076">
    <property type="entry name" value="DNAJ_2"/>
    <property type="match status" value="1"/>
</dbReference>
<comment type="function">
    <text evidence="1">Co-chaperone involved in the maturation of iron-sulfur cluster-containing proteins. Seems to help targeting proteins to be folded toward HscA.</text>
</comment>
<comment type="subunit">
    <text evidence="1">Interacts with HscA and stimulates its ATPase activity.</text>
</comment>
<comment type="similarity">
    <text evidence="1">Belongs to the HscB family.</text>
</comment>
<protein>
    <recommendedName>
        <fullName evidence="1">Co-chaperone protein HscB homolog</fullName>
    </recommendedName>
</protein>
<proteinExistence type="inferred from homology"/>
<gene>
    <name evidence="1" type="primary">hscB</name>
    <name type="ordered locus">NGK_1283</name>
</gene>